<keyword id="KW-0131">Cell cycle</keyword>
<keyword id="KW-0132">Cell division</keyword>
<keyword id="KW-0997">Cell inner membrane</keyword>
<keyword id="KW-1003">Cell membrane</keyword>
<keyword id="KW-0175">Coiled coil</keyword>
<keyword id="KW-0472">Membrane</keyword>
<keyword id="KW-0812">Transmembrane</keyword>
<keyword id="KW-1133">Transmembrane helix</keyword>
<evidence type="ECO:0000255" key="1">
    <source>
        <dbReference type="HAMAP-Rule" id="MF_00599"/>
    </source>
</evidence>
<comment type="function">
    <text evidence="1">Essential cell division protein. May link together the upstream cell division proteins, which are predominantly cytoplasmic, with the downstream cell division proteins, which are predominantly periplasmic.</text>
</comment>
<comment type="subunit">
    <text evidence="1">Part of a complex composed of FtsB, FtsL and FtsQ.</text>
</comment>
<comment type="subcellular location">
    <subcellularLocation>
        <location evidence="1">Cell inner membrane</location>
        <topology evidence="1">Single-pass type II membrane protein</topology>
    </subcellularLocation>
    <text evidence="1">Localizes to the division septum.</text>
</comment>
<comment type="similarity">
    <text evidence="1">Belongs to the FtsB family.</text>
</comment>
<protein>
    <recommendedName>
        <fullName evidence="1">Cell division protein FtsB</fullName>
    </recommendedName>
</protein>
<dbReference type="EMBL" id="CU928164">
    <property type="protein sequence ID" value="CAR19056.1"/>
    <property type="molecule type" value="Genomic_DNA"/>
</dbReference>
<dbReference type="RefSeq" id="WP_000517476.1">
    <property type="nucleotide sequence ID" value="NC_011750.1"/>
</dbReference>
<dbReference type="RefSeq" id="YP_002408868.1">
    <property type="nucleotide sequence ID" value="NC_011750.1"/>
</dbReference>
<dbReference type="SMR" id="B7NT92"/>
<dbReference type="STRING" id="585057.ECIAI39_2937"/>
<dbReference type="GeneID" id="93779258"/>
<dbReference type="KEGG" id="ect:ECIAI39_2937"/>
<dbReference type="PATRIC" id="fig|585057.6.peg.3046"/>
<dbReference type="HOGENOM" id="CLU_134863_5_2_6"/>
<dbReference type="Proteomes" id="UP000000749">
    <property type="component" value="Chromosome"/>
</dbReference>
<dbReference type="GO" id="GO:0032153">
    <property type="term" value="C:cell division site"/>
    <property type="evidence" value="ECO:0007669"/>
    <property type="project" value="UniProtKB-UniRule"/>
</dbReference>
<dbReference type="GO" id="GO:0030428">
    <property type="term" value="C:cell septum"/>
    <property type="evidence" value="ECO:0007669"/>
    <property type="project" value="TreeGrafter"/>
</dbReference>
<dbReference type="GO" id="GO:0005886">
    <property type="term" value="C:plasma membrane"/>
    <property type="evidence" value="ECO:0007669"/>
    <property type="project" value="UniProtKB-SubCell"/>
</dbReference>
<dbReference type="GO" id="GO:0043093">
    <property type="term" value="P:FtsZ-dependent cytokinesis"/>
    <property type="evidence" value="ECO:0007669"/>
    <property type="project" value="UniProtKB-UniRule"/>
</dbReference>
<dbReference type="FunFam" id="1.20.5.400:FF:000001">
    <property type="entry name" value="Cell division protein FtsB"/>
    <property type="match status" value="1"/>
</dbReference>
<dbReference type="Gene3D" id="1.20.5.400">
    <property type="match status" value="1"/>
</dbReference>
<dbReference type="HAMAP" id="MF_00599">
    <property type="entry name" value="FtsB"/>
    <property type="match status" value="1"/>
</dbReference>
<dbReference type="InterPro" id="IPR023081">
    <property type="entry name" value="Cell_div_FtsB"/>
</dbReference>
<dbReference type="InterPro" id="IPR007060">
    <property type="entry name" value="FtsL/DivIC"/>
</dbReference>
<dbReference type="NCBIfam" id="NF002058">
    <property type="entry name" value="PRK00888.1"/>
    <property type="match status" value="1"/>
</dbReference>
<dbReference type="PANTHER" id="PTHR37485">
    <property type="entry name" value="CELL DIVISION PROTEIN FTSB"/>
    <property type="match status" value="1"/>
</dbReference>
<dbReference type="PANTHER" id="PTHR37485:SF1">
    <property type="entry name" value="CELL DIVISION PROTEIN FTSB"/>
    <property type="match status" value="1"/>
</dbReference>
<dbReference type="Pfam" id="PF04977">
    <property type="entry name" value="DivIC"/>
    <property type="match status" value="1"/>
</dbReference>
<gene>
    <name evidence="1" type="primary">ftsB</name>
    <name type="ordered locus">ECIAI39_2937</name>
</gene>
<sequence>MGKLTLLLLAILVWLQYSLWFGKNGIHDYTRVNDDVAAQQATNAKLKARNDQLFAEIDDLNGGQEALEERARNELSMTRPGETFYRLVPDASKRAQSAGQNNR</sequence>
<proteinExistence type="inferred from homology"/>
<feature type="chain" id="PRO_1000129924" description="Cell division protein FtsB">
    <location>
        <begin position="1"/>
        <end position="103"/>
    </location>
</feature>
<feature type="topological domain" description="Cytoplasmic" evidence="1">
    <location>
        <begin position="1"/>
        <end position="3"/>
    </location>
</feature>
<feature type="transmembrane region" description="Helical" evidence="1">
    <location>
        <begin position="4"/>
        <end position="21"/>
    </location>
</feature>
<feature type="topological domain" description="Periplasmic" evidence="1">
    <location>
        <begin position="22"/>
        <end position="103"/>
    </location>
</feature>
<feature type="coiled-coil region" evidence="1">
    <location>
        <begin position="31"/>
        <end position="71"/>
    </location>
</feature>
<accession>B7NT92</accession>
<reference key="1">
    <citation type="journal article" date="2009" name="PLoS Genet.">
        <title>Organised genome dynamics in the Escherichia coli species results in highly diverse adaptive paths.</title>
        <authorList>
            <person name="Touchon M."/>
            <person name="Hoede C."/>
            <person name="Tenaillon O."/>
            <person name="Barbe V."/>
            <person name="Baeriswyl S."/>
            <person name="Bidet P."/>
            <person name="Bingen E."/>
            <person name="Bonacorsi S."/>
            <person name="Bouchier C."/>
            <person name="Bouvet O."/>
            <person name="Calteau A."/>
            <person name="Chiapello H."/>
            <person name="Clermont O."/>
            <person name="Cruveiller S."/>
            <person name="Danchin A."/>
            <person name="Diard M."/>
            <person name="Dossat C."/>
            <person name="Karoui M.E."/>
            <person name="Frapy E."/>
            <person name="Garry L."/>
            <person name="Ghigo J.M."/>
            <person name="Gilles A.M."/>
            <person name="Johnson J."/>
            <person name="Le Bouguenec C."/>
            <person name="Lescat M."/>
            <person name="Mangenot S."/>
            <person name="Martinez-Jehanne V."/>
            <person name="Matic I."/>
            <person name="Nassif X."/>
            <person name="Oztas S."/>
            <person name="Petit M.A."/>
            <person name="Pichon C."/>
            <person name="Rouy Z."/>
            <person name="Ruf C.S."/>
            <person name="Schneider D."/>
            <person name="Tourret J."/>
            <person name="Vacherie B."/>
            <person name="Vallenet D."/>
            <person name="Medigue C."/>
            <person name="Rocha E.P.C."/>
            <person name="Denamur E."/>
        </authorList>
    </citation>
    <scope>NUCLEOTIDE SEQUENCE [LARGE SCALE GENOMIC DNA]</scope>
    <source>
        <strain>IAI39 / ExPEC</strain>
    </source>
</reference>
<name>FTSB_ECO7I</name>
<organism>
    <name type="scientific">Escherichia coli O7:K1 (strain IAI39 / ExPEC)</name>
    <dbReference type="NCBI Taxonomy" id="585057"/>
    <lineage>
        <taxon>Bacteria</taxon>
        <taxon>Pseudomonadati</taxon>
        <taxon>Pseudomonadota</taxon>
        <taxon>Gammaproteobacteria</taxon>
        <taxon>Enterobacterales</taxon>
        <taxon>Enterobacteriaceae</taxon>
        <taxon>Escherichia</taxon>
    </lineage>
</organism>